<sequence>MLYLLTAFSDGGDIFNLFRYLTFRAGAAFFTALIFGFLFGRPLIDFLRRKQGKGQPIRDDGPTTHFAKAGTPTMGGLLILSALVVSTLLWARLDNPYVWIVLLVTVAFGLIGFADDYAKVKKQNTKGVPGRVRFLIGLLIAALAAIAAAWSHPPDLTLQLAMPFFKDALINLGWFFVPFAMVVIVGAANAVNLTDGLDGLAIMPVMIAGTTLGVIAYVVGNFNLTDYLGVHFVPGTGELLIFSSALVGGGLGFLWYNAPPAAVFMGDTGSLALSGALGAIAVCTKHEIVLAIVGGLFVTEALSVIIQVLYFKRTGRRVFLMAPIHHHFEKKGWAEPQIVIRFWIISLILALIGLSTLKLR</sequence>
<keyword id="KW-0131">Cell cycle</keyword>
<keyword id="KW-0132">Cell division</keyword>
<keyword id="KW-0997">Cell inner membrane</keyword>
<keyword id="KW-1003">Cell membrane</keyword>
<keyword id="KW-0133">Cell shape</keyword>
<keyword id="KW-0961">Cell wall biogenesis/degradation</keyword>
<keyword id="KW-0460">Magnesium</keyword>
<keyword id="KW-0472">Membrane</keyword>
<keyword id="KW-0479">Metal-binding</keyword>
<keyword id="KW-0573">Peptidoglycan synthesis</keyword>
<keyword id="KW-0808">Transferase</keyword>
<keyword id="KW-0812">Transmembrane</keyword>
<keyword id="KW-1133">Transmembrane helix</keyword>
<reference key="1">
    <citation type="journal article" date="2009" name="J. Bacteriol.">
        <title>Complete genome sequence of Rhodobacter sphaeroides KD131.</title>
        <authorList>
            <person name="Lim S.-K."/>
            <person name="Kim S.J."/>
            <person name="Cha S.H."/>
            <person name="Oh Y.-K."/>
            <person name="Rhee H.-J."/>
            <person name="Kim M.-S."/>
            <person name="Lee J.K."/>
        </authorList>
    </citation>
    <scope>NUCLEOTIDE SEQUENCE [LARGE SCALE GENOMIC DNA]</scope>
    <source>
        <strain>KD131 / KCTC 12085</strain>
    </source>
</reference>
<organism>
    <name type="scientific">Cereibacter sphaeroides (strain KD131 / KCTC 12085)</name>
    <name type="common">Rhodobacter sphaeroides</name>
    <dbReference type="NCBI Taxonomy" id="557760"/>
    <lineage>
        <taxon>Bacteria</taxon>
        <taxon>Pseudomonadati</taxon>
        <taxon>Pseudomonadota</taxon>
        <taxon>Alphaproteobacteria</taxon>
        <taxon>Rhodobacterales</taxon>
        <taxon>Paracoccaceae</taxon>
        <taxon>Cereibacter</taxon>
    </lineage>
</organism>
<feature type="chain" id="PRO_1000117193" description="Phospho-N-acetylmuramoyl-pentapeptide-transferase">
    <location>
        <begin position="1"/>
        <end position="360"/>
    </location>
</feature>
<feature type="transmembrane region" description="Helical" evidence="1">
    <location>
        <begin position="27"/>
        <end position="47"/>
    </location>
</feature>
<feature type="transmembrane region" description="Helical" evidence="1">
    <location>
        <begin position="71"/>
        <end position="91"/>
    </location>
</feature>
<feature type="transmembrane region" description="Helical" evidence="1">
    <location>
        <begin position="93"/>
        <end position="113"/>
    </location>
</feature>
<feature type="transmembrane region" description="Helical" evidence="1">
    <location>
        <begin position="134"/>
        <end position="154"/>
    </location>
</feature>
<feature type="transmembrane region" description="Helical" evidence="1">
    <location>
        <begin position="168"/>
        <end position="188"/>
    </location>
</feature>
<feature type="transmembrane region" description="Helical" evidence="1">
    <location>
        <begin position="199"/>
        <end position="219"/>
    </location>
</feature>
<feature type="transmembrane region" description="Helical" evidence="1">
    <location>
        <begin position="239"/>
        <end position="259"/>
    </location>
</feature>
<feature type="transmembrane region" description="Helical" evidence="1">
    <location>
        <begin position="262"/>
        <end position="282"/>
    </location>
</feature>
<feature type="transmembrane region" description="Helical" evidence="1">
    <location>
        <begin position="288"/>
        <end position="308"/>
    </location>
</feature>
<feature type="transmembrane region" description="Helical" evidence="1">
    <location>
        <begin position="337"/>
        <end position="357"/>
    </location>
</feature>
<gene>
    <name evidence="1" type="primary">mraY</name>
    <name type="ordered locus">RSKD131_0411</name>
</gene>
<name>MRAY_CERSK</name>
<comment type="function">
    <text evidence="1">Catalyzes the initial step of the lipid cycle reactions in the biosynthesis of the cell wall peptidoglycan: transfers peptidoglycan precursor phospho-MurNAc-pentapeptide from UDP-MurNAc-pentapeptide onto the lipid carrier undecaprenyl phosphate, yielding undecaprenyl-pyrophosphoryl-MurNAc-pentapeptide, known as lipid I.</text>
</comment>
<comment type="catalytic activity">
    <reaction evidence="1">
        <text>UDP-N-acetyl-alpha-D-muramoyl-L-alanyl-gamma-D-glutamyl-meso-2,6-diaminopimeloyl-D-alanyl-D-alanine + di-trans,octa-cis-undecaprenyl phosphate = di-trans,octa-cis-undecaprenyl diphospho-N-acetyl-alpha-D-muramoyl-L-alanyl-D-glutamyl-meso-2,6-diaminopimeloyl-D-alanyl-D-alanine + UMP</text>
        <dbReference type="Rhea" id="RHEA:28386"/>
        <dbReference type="ChEBI" id="CHEBI:57865"/>
        <dbReference type="ChEBI" id="CHEBI:60392"/>
        <dbReference type="ChEBI" id="CHEBI:61386"/>
        <dbReference type="ChEBI" id="CHEBI:61387"/>
        <dbReference type="EC" id="2.7.8.13"/>
    </reaction>
</comment>
<comment type="cofactor">
    <cofactor evidence="1">
        <name>Mg(2+)</name>
        <dbReference type="ChEBI" id="CHEBI:18420"/>
    </cofactor>
</comment>
<comment type="pathway">
    <text evidence="1">Cell wall biogenesis; peptidoglycan biosynthesis.</text>
</comment>
<comment type="subcellular location">
    <subcellularLocation>
        <location evidence="1">Cell inner membrane</location>
        <topology evidence="1">Multi-pass membrane protein</topology>
    </subcellularLocation>
</comment>
<comment type="similarity">
    <text evidence="1">Belongs to the glycosyltransferase 4 family. MraY subfamily.</text>
</comment>
<proteinExistence type="inferred from homology"/>
<dbReference type="EC" id="2.7.8.13" evidence="1"/>
<dbReference type="EMBL" id="CP001150">
    <property type="protein sequence ID" value="ACM00271.1"/>
    <property type="molecule type" value="Genomic_DNA"/>
</dbReference>
<dbReference type="RefSeq" id="WP_012643698.1">
    <property type="nucleotide sequence ID" value="NC_011963.1"/>
</dbReference>
<dbReference type="SMR" id="B9KNJ3"/>
<dbReference type="GeneID" id="67445873"/>
<dbReference type="KEGG" id="rsk:RSKD131_0411"/>
<dbReference type="HOGENOM" id="CLU_023982_0_0_5"/>
<dbReference type="UniPathway" id="UPA00219"/>
<dbReference type="GO" id="GO:0005886">
    <property type="term" value="C:plasma membrane"/>
    <property type="evidence" value="ECO:0007669"/>
    <property type="project" value="UniProtKB-SubCell"/>
</dbReference>
<dbReference type="GO" id="GO:0046872">
    <property type="term" value="F:metal ion binding"/>
    <property type="evidence" value="ECO:0007669"/>
    <property type="project" value="UniProtKB-KW"/>
</dbReference>
<dbReference type="GO" id="GO:0008963">
    <property type="term" value="F:phospho-N-acetylmuramoyl-pentapeptide-transferase activity"/>
    <property type="evidence" value="ECO:0007669"/>
    <property type="project" value="UniProtKB-UniRule"/>
</dbReference>
<dbReference type="GO" id="GO:0051992">
    <property type="term" value="F:UDP-N-acetylmuramoyl-L-alanyl-D-glutamyl-meso-2,6-diaminopimelyl-D-alanyl-D-alanine:undecaprenyl-phosphate transferase activity"/>
    <property type="evidence" value="ECO:0007669"/>
    <property type="project" value="RHEA"/>
</dbReference>
<dbReference type="GO" id="GO:0051301">
    <property type="term" value="P:cell division"/>
    <property type="evidence" value="ECO:0007669"/>
    <property type="project" value="UniProtKB-KW"/>
</dbReference>
<dbReference type="GO" id="GO:0071555">
    <property type="term" value="P:cell wall organization"/>
    <property type="evidence" value="ECO:0007669"/>
    <property type="project" value="UniProtKB-KW"/>
</dbReference>
<dbReference type="GO" id="GO:0009252">
    <property type="term" value="P:peptidoglycan biosynthetic process"/>
    <property type="evidence" value="ECO:0007669"/>
    <property type="project" value="UniProtKB-UniRule"/>
</dbReference>
<dbReference type="GO" id="GO:0008360">
    <property type="term" value="P:regulation of cell shape"/>
    <property type="evidence" value="ECO:0007669"/>
    <property type="project" value="UniProtKB-KW"/>
</dbReference>
<dbReference type="CDD" id="cd06852">
    <property type="entry name" value="GT_MraY"/>
    <property type="match status" value="1"/>
</dbReference>
<dbReference type="HAMAP" id="MF_00038">
    <property type="entry name" value="MraY"/>
    <property type="match status" value="1"/>
</dbReference>
<dbReference type="InterPro" id="IPR000715">
    <property type="entry name" value="Glycosyl_transferase_4"/>
</dbReference>
<dbReference type="InterPro" id="IPR003524">
    <property type="entry name" value="PNAcMuramoyl-5peptid_Trfase"/>
</dbReference>
<dbReference type="InterPro" id="IPR018480">
    <property type="entry name" value="PNAcMuramoyl-5peptid_Trfase_CS"/>
</dbReference>
<dbReference type="NCBIfam" id="TIGR00445">
    <property type="entry name" value="mraY"/>
    <property type="match status" value="1"/>
</dbReference>
<dbReference type="PANTHER" id="PTHR22926">
    <property type="entry name" value="PHOSPHO-N-ACETYLMURAMOYL-PENTAPEPTIDE-TRANSFERASE"/>
    <property type="match status" value="1"/>
</dbReference>
<dbReference type="PANTHER" id="PTHR22926:SF5">
    <property type="entry name" value="PHOSPHO-N-ACETYLMURAMOYL-PENTAPEPTIDE-TRANSFERASE HOMOLOG"/>
    <property type="match status" value="1"/>
</dbReference>
<dbReference type="Pfam" id="PF00953">
    <property type="entry name" value="Glycos_transf_4"/>
    <property type="match status" value="1"/>
</dbReference>
<dbReference type="Pfam" id="PF10555">
    <property type="entry name" value="MraY_sig1"/>
    <property type="match status" value="1"/>
</dbReference>
<dbReference type="PROSITE" id="PS01347">
    <property type="entry name" value="MRAY_1"/>
    <property type="match status" value="1"/>
</dbReference>
<dbReference type="PROSITE" id="PS01348">
    <property type="entry name" value="MRAY_2"/>
    <property type="match status" value="1"/>
</dbReference>
<evidence type="ECO:0000255" key="1">
    <source>
        <dbReference type="HAMAP-Rule" id="MF_00038"/>
    </source>
</evidence>
<accession>B9KNJ3</accession>
<protein>
    <recommendedName>
        <fullName evidence="1">Phospho-N-acetylmuramoyl-pentapeptide-transferase</fullName>
        <ecNumber evidence="1">2.7.8.13</ecNumber>
    </recommendedName>
    <alternativeName>
        <fullName evidence="1">UDP-MurNAc-pentapeptide phosphotransferase</fullName>
    </alternativeName>
</protein>